<reference key="1">
    <citation type="submission" date="2006-10" db="EMBL/GenBank/DDBJ databases">
        <authorList>
            <consortium name="NIH - Zebrafish Gene Collection (ZGC) project"/>
        </authorList>
    </citation>
    <scope>NUCLEOTIDE SEQUENCE [LARGE SCALE MRNA]</scope>
    <source>
        <tissue>Olfactory epithelium</tissue>
    </source>
</reference>
<evidence type="ECO:0000250" key="1"/>
<evidence type="ECO:0000255" key="2"/>
<evidence type="ECO:0000305" key="3"/>
<comment type="cofactor">
    <cofactor evidence="1">
        <name>a divalent metal cation</name>
        <dbReference type="ChEBI" id="CHEBI:60240"/>
    </cofactor>
    <text evidence="1">Binds 2 divalent metal cations.</text>
</comment>
<comment type="subcellular location">
    <subcellularLocation>
        <location evidence="3">Membrane</location>
        <topology evidence="3">Multi-pass membrane protein</topology>
    </subcellularLocation>
</comment>
<comment type="similarity">
    <text evidence="3">Belongs to the metallophosphoesterase superfamily. LOC643853 family.</text>
</comment>
<protein>
    <recommendedName>
        <fullName>Transmembrane protein with metallophosphoesterase domain</fullName>
        <ecNumber>3.1.-.-</ecNumber>
    </recommendedName>
</protein>
<gene>
    <name type="primary">tmppe</name>
    <name type="ORF">zgc:153790</name>
</gene>
<dbReference type="EC" id="3.1.-.-"/>
<dbReference type="EMBL" id="BC124738">
    <property type="protein sequence ID" value="AAI24739.1"/>
    <property type="molecule type" value="mRNA"/>
</dbReference>
<dbReference type="RefSeq" id="NP_001073512.1">
    <property type="nucleotide sequence ID" value="NM_001080043.1"/>
</dbReference>
<dbReference type="FunCoup" id="Q08BG1">
    <property type="interactions" value="6"/>
</dbReference>
<dbReference type="STRING" id="7955.ENSDARP00000116950"/>
<dbReference type="PaxDb" id="7955-ENSDARP00000116950"/>
<dbReference type="GeneID" id="569483"/>
<dbReference type="KEGG" id="dre:569483"/>
<dbReference type="AGR" id="ZFIN:ZDB-GENE-061013-104"/>
<dbReference type="CTD" id="643853"/>
<dbReference type="ZFIN" id="ZDB-GENE-061013-104">
    <property type="gene designation" value="tmppe"/>
</dbReference>
<dbReference type="eggNOG" id="ENOG502QRHG">
    <property type="taxonomic scope" value="Eukaryota"/>
</dbReference>
<dbReference type="InParanoid" id="Q08BG1"/>
<dbReference type="OrthoDB" id="783096at2759"/>
<dbReference type="PhylomeDB" id="Q08BG1"/>
<dbReference type="PRO" id="PR:Q08BG1"/>
<dbReference type="Proteomes" id="UP000000437">
    <property type="component" value="Alternate scaffold 7"/>
</dbReference>
<dbReference type="Proteomes" id="UP000000437">
    <property type="component" value="Chromosome 7"/>
</dbReference>
<dbReference type="GO" id="GO:0016020">
    <property type="term" value="C:membrane"/>
    <property type="evidence" value="ECO:0007669"/>
    <property type="project" value="UniProtKB-SubCell"/>
</dbReference>
<dbReference type="GO" id="GO:0016787">
    <property type="term" value="F:hydrolase activity"/>
    <property type="evidence" value="ECO:0007669"/>
    <property type="project" value="UniProtKB-KW"/>
</dbReference>
<dbReference type="GO" id="GO:0046872">
    <property type="term" value="F:metal ion binding"/>
    <property type="evidence" value="ECO:0007669"/>
    <property type="project" value="UniProtKB-KW"/>
</dbReference>
<dbReference type="CDD" id="cd07385">
    <property type="entry name" value="MPP_YkuE_C"/>
    <property type="match status" value="1"/>
</dbReference>
<dbReference type="Gene3D" id="3.60.21.10">
    <property type="match status" value="1"/>
</dbReference>
<dbReference type="InterPro" id="IPR004843">
    <property type="entry name" value="Calcineurin-like_PHP_ApaH"/>
</dbReference>
<dbReference type="InterPro" id="IPR029052">
    <property type="entry name" value="Metallo-depent_PP-like"/>
</dbReference>
<dbReference type="InterPro" id="IPR051158">
    <property type="entry name" value="Metallophosphoesterase_sf"/>
</dbReference>
<dbReference type="PANTHER" id="PTHR31302:SF0">
    <property type="entry name" value="TRANSMEMBRANE PROTEIN WITH METALLOPHOSPHOESTERASE DOMAIN"/>
    <property type="match status" value="1"/>
</dbReference>
<dbReference type="PANTHER" id="PTHR31302">
    <property type="entry name" value="TRANSMEMBRANE PROTEIN WITH METALLOPHOSPHOESTERASE DOMAIN-RELATED"/>
    <property type="match status" value="1"/>
</dbReference>
<dbReference type="Pfam" id="PF00149">
    <property type="entry name" value="Metallophos"/>
    <property type="match status" value="1"/>
</dbReference>
<dbReference type="SUPFAM" id="SSF56300">
    <property type="entry name" value="Metallo-dependent phosphatases"/>
    <property type="match status" value="1"/>
</dbReference>
<name>TMPPE_DANRE</name>
<keyword id="KW-0378">Hydrolase</keyword>
<keyword id="KW-0472">Membrane</keyword>
<keyword id="KW-0479">Metal-binding</keyword>
<keyword id="KW-1185">Reference proteome</keyword>
<keyword id="KW-0812">Transmembrane</keyword>
<keyword id="KW-1133">Transmembrane helix</keyword>
<sequence length="437" mass="48410">MFGFGRLSAEGKVGIASGVVFFSMLISRTLISERVDKGTRALLFRVQFLLFINSLLLLGSLYLWKRVVKRLCGARAAPSVPQRCWRIIVLLFLALVHGSYLCMFFLVDTEPHWLSLLSFSCLGVYVILLFFLFVFGCLNRLGKLLSRSRSAEEAVASGSFRQTVLALIITAVLAVYGLVNAAQPPKVVDVEIPVEKLPESLNGLRLVLLSDIHLGPTVGRSKLQRIVSMVNELNPDVVVIVGDLTDSQVSRLRSAAEPLGQMKPRLGSYFATGNHDYYTADVEGWFELLHSMGIEALHNSHAKVFRPERTEDWICLAGIDDLEARMLRYPGHGMDVEKALNGCTTEGPIILLAHQPHAAKQALQQRPDISLVLSGHTHAGQLFPLTILAFLMNPFFCGLYRVSEHTMVYVTPGTGYYGIPMRIASRSEITNIVLKQA</sequence>
<accession>Q08BG1</accession>
<feature type="chain" id="PRO_0000322117" description="Transmembrane protein with metallophosphoesterase domain">
    <location>
        <begin position="1"/>
        <end position="437"/>
    </location>
</feature>
<feature type="transmembrane region" description="Helical" evidence="2">
    <location>
        <begin position="7"/>
        <end position="27"/>
    </location>
</feature>
<feature type="transmembrane region" description="Helical" evidence="2">
    <location>
        <begin position="41"/>
        <end position="61"/>
    </location>
</feature>
<feature type="transmembrane region" description="Helical" evidence="2">
    <location>
        <begin position="87"/>
        <end position="107"/>
    </location>
</feature>
<feature type="transmembrane region" description="Helical" evidence="2">
    <location>
        <begin position="116"/>
        <end position="136"/>
    </location>
</feature>
<feature type="transmembrane region" description="Helical" evidence="2">
    <location>
        <begin position="164"/>
        <end position="184"/>
    </location>
</feature>
<feature type="binding site" evidence="1">
    <location>
        <position position="211"/>
    </location>
    <ligand>
        <name>a divalent metal cation</name>
        <dbReference type="ChEBI" id="CHEBI:60240"/>
        <label>1</label>
    </ligand>
</feature>
<feature type="binding site" evidence="1">
    <location>
        <position position="213"/>
    </location>
    <ligand>
        <name>a divalent metal cation</name>
        <dbReference type="ChEBI" id="CHEBI:60240"/>
        <label>1</label>
    </ligand>
</feature>
<feature type="binding site" evidence="1">
    <location>
        <position position="243"/>
    </location>
    <ligand>
        <name>a divalent metal cation</name>
        <dbReference type="ChEBI" id="CHEBI:60240"/>
        <label>1</label>
    </ligand>
</feature>
<feature type="binding site" evidence="1">
    <location>
        <position position="243"/>
    </location>
    <ligand>
        <name>a divalent metal cation</name>
        <dbReference type="ChEBI" id="CHEBI:60240"/>
        <label>2</label>
    </ligand>
</feature>
<feature type="binding site" evidence="1">
    <location>
        <position position="274"/>
    </location>
    <ligand>
        <name>a divalent metal cation</name>
        <dbReference type="ChEBI" id="CHEBI:60240"/>
        <label>2</label>
    </ligand>
</feature>
<feature type="binding site" evidence="1">
    <location>
        <position position="376"/>
    </location>
    <ligand>
        <name>a divalent metal cation</name>
        <dbReference type="ChEBI" id="CHEBI:60240"/>
        <label>2</label>
    </ligand>
</feature>
<feature type="binding site" evidence="1">
    <location>
        <position position="378"/>
    </location>
    <ligand>
        <name>a divalent metal cation</name>
        <dbReference type="ChEBI" id="CHEBI:60240"/>
        <label>1</label>
    </ligand>
</feature>
<organism>
    <name type="scientific">Danio rerio</name>
    <name type="common">Zebrafish</name>
    <name type="synonym">Brachydanio rerio</name>
    <dbReference type="NCBI Taxonomy" id="7955"/>
    <lineage>
        <taxon>Eukaryota</taxon>
        <taxon>Metazoa</taxon>
        <taxon>Chordata</taxon>
        <taxon>Craniata</taxon>
        <taxon>Vertebrata</taxon>
        <taxon>Euteleostomi</taxon>
        <taxon>Actinopterygii</taxon>
        <taxon>Neopterygii</taxon>
        <taxon>Teleostei</taxon>
        <taxon>Ostariophysi</taxon>
        <taxon>Cypriniformes</taxon>
        <taxon>Danionidae</taxon>
        <taxon>Danioninae</taxon>
        <taxon>Danio</taxon>
    </lineage>
</organism>
<proteinExistence type="evidence at transcript level"/>